<name>MURD_DEIRA</name>
<evidence type="ECO:0000255" key="1">
    <source>
        <dbReference type="HAMAP-Rule" id="MF_00639"/>
    </source>
</evidence>
<reference key="1">
    <citation type="journal article" date="1999" name="Science">
        <title>Genome sequence of the radioresistant bacterium Deinococcus radiodurans R1.</title>
        <authorList>
            <person name="White O."/>
            <person name="Eisen J.A."/>
            <person name="Heidelberg J.F."/>
            <person name="Hickey E.K."/>
            <person name="Peterson J.D."/>
            <person name="Dodson R.J."/>
            <person name="Haft D.H."/>
            <person name="Gwinn M.L."/>
            <person name="Nelson W.C."/>
            <person name="Richardson D.L."/>
            <person name="Moffat K.S."/>
            <person name="Qin H."/>
            <person name="Jiang L."/>
            <person name="Pamphile W."/>
            <person name="Crosby M."/>
            <person name="Shen M."/>
            <person name="Vamathevan J.J."/>
            <person name="Lam P."/>
            <person name="McDonald L.A."/>
            <person name="Utterback T.R."/>
            <person name="Zalewski C."/>
            <person name="Makarova K.S."/>
            <person name="Aravind L."/>
            <person name="Daly M.J."/>
            <person name="Minton K.W."/>
            <person name="Fleischmann R.D."/>
            <person name="Ketchum K.A."/>
            <person name="Nelson K.E."/>
            <person name="Salzberg S.L."/>
            <person name="Smith H.O."/>
            <person name="Venter J.C."/>
            <person name="Fraser C.M."/>
        </authorList>
    </citation>
    <scope>NUCLEOTIDE SEQUENCE [LARGE SCALE GENOMIC DNA]</scope>
    <source>
        <strain>ATCC 13939 / DSM 20539 / JCM 16871 / CCUG 27074 / LMG 4051 / NBRC 15346 / NCIMB 9279 / VKM B-1422 / R1</strain>
    </source>
</reference>
<accession>Q9RRJ4</accession>
<protein>
    <recommendedName>
        <fullName evidence="1">UDP-N-acetylmuramoylalanine--D-glutamate ligase</fullName>
        <ecNumber evidence="1">6.3.2.9</ecNumber>
    </recommendedName>
    <alternativeName>
        <fullName evidence="1">D-glutamic acid-adding enzyme</fullName>
    </alternativeName>
    <alternativeName>
        <fullName evidence="1">UDP-N-acetylmuramoyl-L-alanyl-D-glutamate synthetase</fullName>
    </alternativeName>
</protein>
<feature type="chain" id="PRO_0000109007" description="UDP-N-acetylmuramoylalanine--D-glutamate ligase">
    <location>
        <begin position="1"/>
        <end position="457"/>
    </location>
</feature>
<feature type="binding site" evidence="1">
    <location>
        <begin position="126"/>
        <end position="132"/>
    </location>
    <ligand>
        <name>ATP</name>
        <dbReference type="ChEBI" id="CHEBI:30616"/>
    </ligand>
</feature>
<comment type="function">
    <text evidence="1">Cell wall formation. Catalyzes the addition of glutamate to the nucleotide precursor UDP-N-acetylmuramoyl-L-alanine (UMA).</text>
</comment>
<comment type="catalytic activity">
    <reaction evidence="1">
        <text>UDP-N-acetyl-alpha-D-muramoyl-L-alanine + D-glutamate + ATP = UDP-N-acetyl-alpha-D-muramoyl-L-alanyl-D-glutamate + ADP + phosphate + H(+)</text>
        <dbReference type="Rhea" id="RHEA:16429"/>
        <dbReference type="ChEBI" id="CHEBI:15378"/>
        <dbReference type="ChEBI" id="CHEBI:29986"/>
        <dbReference type="ChEBI" id="CHEBI:30616"/>
        <dbReference type="ChEBI" id="CHEBI:43474"/>
        <dbReference type="ChEBI" id="CHEBI:83898"/>
        <dbReference type="ChEBI" id="CHEBI:83900"/>
        <dbReference type="ChEBI" id="CHEBI:456216"/>
        <dbReference type="EC" id="6.3.2.9"/>
    </reaction>
</comment>
<comment type="pathway">
    <text evidence="1">Cell wall biogenesis; peptidoglycan biosynthesis.</text>
</comment>
<comment type="subcellular location">
    <subcellularLocation>
        <location evidence="1">Cytoplasm</location>
    </subcellularLocation>
</comment>
<comment type="similarity">
    <text evidence="1">Belongs to the MurCDEF family.</text>
</comment>
<sequence length="457" mass="47975">MVRGAVPRTTEFGELLYGKAVNLGGRVLIYGLGRSGRGVAHFLHGEGVSAFWHDLRPAPEDEALMRQLGHRQADLGGTYDLVVAAPGVPIDHRDLRVLAGRGAEIIGEVALAARLRPELPMVGITGTAGKGSTTVLIAQLLRACGLRAREGGNIDPPLLDVVDDAEVAVVELSSFQLERVPGLRLPVAVITNLGVDHLDRHGSVETYHAAKLNITAGQQSGDVLVRPADLPVPTRAQTVTFTPERLCLRDGQEVLPVADLPPGVHPANAAAALLAAEALLRHLGRAVDPAVLADALRAAQPVKGRFETVGQLGEVGFIEDSIATRTIAVESALRQARPPIAWLVGGRDKGAELAPLRAAAEGRVTRVIAFGEDGEALARDLGLPFEVIKAETGDESMDRAVRAGWEALGGAGGTGTVLLAPVGTSFDQFRDYQQRGASFRRAVQALLGTQSGSGESA</sequence>
<keyword id="KW-0067">ATP-binding</keyword>
<keyword id="KW-0131">Cell cycle</keyword>
<keyword id="KW-0132">Cell division</keyword>
<keyword id="KW-0133">Cell shape</keyword>
<keyword id="KW-0961">Cell wall biogenesis/degradation</keyword>
<keyword id="KW-0963">Cytoplasm</keyword>
<keyword id="KW-0436">Ligase</keyword>
<keyword id="KW-0547">Nucleotide-binding</keyword>
<keyword id="KW-0573">Peptidoglycan synthesis</keyword>
<keyword id="KW-1185">Reference proteome</keyword>
<proteinExistence type="inferred from homology"/>
<gene>
    <name evidence="1" type="primary">murD</name>
    <name type="ordered locus">DR_2496</name>
</gene>
<dbReference type="EC" id="6.3.2.9" evidence="1"/>
<dbReference type="EMBL" id="AE000513">
    <property type="protein sequence ID" value="AAF12038.1"/>
    <property type="molecule type" value="Genomic_DNA"/>
</dbReference>
<dbReference type="PIR" id="C75266">
    <property type="entry name" value="C75266"/>
</dbReference>
<dbReference type="RefSeq" id="NP_296216.1">
    <property type="nucleotide sequence ID" value="NC_001263.1"/>
</dbReference>
<dbReference type="RefSeq" id="WP_010889121.1">
    <property type="nucleotide sequence ID" value="NC_001263.1"/>
</dbReference>
<dbReference type="SMR" id="Q9RRJ4"/>
<dbReference type="FunCoup" id="Q9RRJ4">
    <property type="interactions" value="361"/>
</dbReference>
<dbReference type="STRING" id="243230.DR_2496"/>
<dbReference type="PaxDb" id="243230-DR_2496"/>
<dbReference type="EnsemblBacteria" id="AAF12038">
    <property type="protein sequence ID" value="AAF12038"/>
    <property type="gene ID" value="DR_2496"/>
</dbReference>
<dbReference type="GeneID" id="69518749"/>
<dbReference type="KEGG" id="dra:DR_2496"/>
<dbReference type="PATRIC" id="fig|243230.17.peg.2736"/>
<dbReference type="eggNOG" id="COG0771">
    <property type="taxonomic scope" value="Bacteria"/>
</dbReference>
<dbReference type="HOGENOM" id="CLU_032540_0_0_0"/>
<dbReference type="InParanoid" id="Q9RRJ4"/>
<dbReference type="OrthoDB" id="9809796at2"/>
<dbReference type="UniPathway" id="UPA00219"/>
<dbReference type="Proteomes" id="UP000002524">
    <property type="component" value="Chromosome 1"/>
</dbReference>
<dbReference type="GO" id="GO:0005737">
    <property type="term" value="C:cytoplasm"/>
    <property type="evidence" value="ECO:0007669"/>
    <property type="project" value="UniProtKB-SubCell"/>
</dbReference>
<dbReference type="GO" id="GO:0005524">
    <property type="term" value="F:ATP binding"/>
    <property type="evidence" value="ECO:0007669"/>
    <property type="project" value="UniProtKB-UniRule"/>
</dbReference>
<dbReference type="GO" id="GO:0008764">
    <property type="term" value="F:UDP-N-acetylmuramoylalanine-D-glutamate ligase activity"/>
    <property type="evidence" value="ECO:0007669"/>
    <property type="project" value="UniProtKB-UniRule"/>
</dbReference>
<dbReference type="GO" id="GO:0051301">
    <property type="term" value="P:cell division"/>
    <property type="evidence" value="ECO:0007669"/>
    <property type="project" value="UniProtKB-KW"/>
</dbReference>
<dbReference type="GO" id="GO:0071555">
    <property type="term" value="P:cell wall organization"/>
    <property type="evidence" value="ECO:0007669"/>
    <property type="project" value="UniProtKB-KW"/>
</dbReference>
<dbReference type="GO" id="GO:0009252">
    <property type="term" value="P:peptidoglycan biosynthetic process"/>
    <property type="evidence" value="ECO:0007669"/>
    <property type="project" value="UniProtKB-UniRule"/>
</dbReference>
<dbReference type="GO" id="GO:0008360">
    <property type="term" value="P:regulation of cell shape"/>
    <property type="evidence" value="ECO:0007669"/>
    <property type="project" value="UniProtKB-KW"/>
</dbReference>
<dbReference type="Gene3D" id="3.90.190.20">
    <property type="entry name" value="Mur ligase, C-terminal domain"/>
    <property type="match status" value="1"/>
</dbReference>
<dbReference type="Gene3D" id="3.40.1190.10">
    <property type="entry name" value="Mur-like, catalytic domain"/>
    <property type="match status" value="1"/>
</dbReference>
<dbReference type="Gene3D" id="3.40.50.720">
    <property type="entry name" value="NAD(P)-binding Rossmann-like Domain"/>
    <property type="match status" value="1"/>
</dbReference>
<dbReference type="HAMAP" id="MF_00639">
    <property type="entry name" value="MurD"/>
    <property type="match status" value="1"/>
</dbReference>
<dbReference type="InterPro" id="IPR036565">
    <property type="entry name" value="Mur-like_cat_sf"/>
</dbReference>
<dbReference type="InterPro" id="IPR004101">
    <property type="entry name" value="Mur_ligase_C"/>
</dbReference>
<dbReference type="InterPro" id="IPR036615">
    <property type="entry name" value="Mur_ligase_C_dom_sf"/>
</dbReference>
<dbReference type="InterPro" id="IPR013221">
    <property type="entry name" value="Mur_ligase_cen"/>
</dbReference>
<dbReference type="InterPro" id="IPR005762">
    <property type="entry name" value="MurD"/>
</dbReference>
<dbReference type="NCBIfam" id="TIGR01087">
    <property type="entry name" value="murD"/>
    <property type="match status" value="1"/>
</dbReference>
<dbReference type="PANTHER" id="PTHR43692">
    <property type="entry name" value="UDP-N-ACETYLMURAMOYLALANINE--D-GLUTAMATE LIGASE"/>
    <property type="match status" value="1"/>
</dbReference>
<dbReference type="PANTHER" id="PTHR43692:SF1">
    <property type="entry name" value="UDP-N-ACETYLMURAMOYLALANINE--D-GLUTAMATE LIGASE"/>
    <property type="match status" value="1"/>
</dbReference>
<dbReference type="Pfam" id="PF02875">
    <property type="entry name" value="Mur_ligase_C"/>
    <property type="match status" value="1"/>
</dbReference>
<dbReference type="Pfam" id="PF08245">
    <property type="entry name" value="Mur_ligase_M"/>
    <property type="match status" value="1"/>
</dbReference>
<dbReference type="Pfam" id="PF21799">
    <property type="entry name" value="MurD-like_N"/>
    <property type="match status" value="1"/>
</dbReference>
<dbReference type="SUPFAM" id="SSF51984">
    <property type="entry name" value="MurCD N-terminal domain"/>
    <property type="match status" value="1"/>
</dbReference>
<dbReference type="SUPFAM" id="SSF53623">
    <property type="entry name" value="MurD-like peptide ligases, catalytic domain"/>
    <property type="match status" value="1"/>
</dbReference>
<dbReference type="SUPFAM" id="SSF53244">
    <property type="entry name" value="MurD-like peptide ligases, peptide-binding domain"/>
    <property type="match status" value="1"/>
</dbReference>
<organism>
    <name type="scientific">Deinococcus radiodurans (strain ATCC 13939 / DSM 20539 / JCM 16871 / CCUG 27074 / LMG 4051 / NBRC 15346 / NCIMB 9279 / VKM B-1422 / R1)</name>
    <dbReference type="NCBI Taxonomy" id="243230"/>
    <lineage>
        <taxon>Bacteria</taxon>
        <taxon>Thermotogati</taxon>
        <taxon>Deinococcota</taxon>
        <taxon>Deinococci</taxon>
        <taxon>Deinococcales</taxon>
        <taxon>Deinococcaceae</taxon>
        <taxon>Deinococcus</taxon>
    </lineage>
</organism>